<accession>Q4K880</accession>
<comment type="cofactor">
    <cofactor evidence="1">
        <name>Zn(2+)</name>
        <dbReference type="ChEBI" id="CHEBI:29105"/>
    </cofactor>
    <text evidence="1">Binds 1 zinc ion.</text>
</comment>
<comment type="subcellular location">
    <subcellularLocation>
        <location evidence="1">Cytoplasm</location>
    </subcellularLocation>
</comment>
<comment type="similarity">
    <text evidence="1">Belongs to the SprT family.</text>
</comment>
<sequence length="164" mass="19514">MPEQLNTRVEDCFQLAESFFKRPFKRPVVSLKLRGQKAGVAHLHENLLRFNPQLYRENTEDFLKQTVAHEVAHLIAHQLFGERIQPHGEEWQLIMRGVYELPPNRCHTYDVKRRSVTRYIYRCPCAESDFPFSAQRHKLVAQGRRYLCRRCRQTLVYSGETRVE</sequence>
<feature type="chain" id="PRO_1000046534" description="Protein SprT">
    <location>
        <begin position="1"/>
        <end position="164"/>
    </location>
</feature>
<feature type="domain" description="SprT-like" evidence="1">
    <location>
        <begin position="14"/>
        <end position="156"/>
    </location>
</feature>
<feature type="active site" evidence="1">
    <location>
        <position position="70"/>
    </location>
</feature>
<feature type="binding site" evidence="1">
    <location>
        <position position="69"/>
    </location>
    <ligand>
        <name>Zn(2+)</name>
        <dbReference type="ChEBI" id="CHEBI:29105"/>
    </ligand>
</feature>
<feature type="binding site" evidence="1">
    <location>
        <position position="73"/>
    </location>
    <ligand>
        <name>Zn(2+)</name>
        <dbReference type="ChEBI" id="CHEBI:29105"/>
    </ligand>
</feature>
<keyword id="KW-0963">Cytoplasm</keyword>
<keyword id="KW-0479">Metal-binding</keyword>
<keyword id="KW-0862">Zinc</keyword>
<gene>
    <name evidence="1" type="primary">sprT</name>
    <name type="ordered locus">PFL_4465</name>
</gene>
<protein>
    <recommendedName>
        <fullName evidence="1">Protein SprT</fullName>
    </recommendedName>
</protein>
<evidence type="ECO:0000255" key="1">
    <source>
        <dbReference type="HAMAP-Rule" id="MF_00746"/>
    </source>
</evidence>
<organism>
    <name type="scientific">Pseudomonas fluorescens (strain ATCC BAA-477 / NRRL B-23932 / Pf-5)</name>
    <dbReference type="NCBI Taxonomy" id="220664"/>
    <lineage>
        <taxon>Bacteria</taxon>
        <taxon>Pseudomonadati</taxon>
        <taxon>Pseudomonadota</taxon>
        <taxon>Gammaproteobacteria</taxon>
        <taxon>Pseudomonadales</taxon>
        <taxon>Pseudomonadaceae</taxon>
        <taxon>Pseudomonas</taxon>
    </lineage>
</organism>
<reference key="1">
    <citation type="journal article" date="2005" name="Nat. Biotechnol.">
        <title>Complete genome sequence of the plant commensal Pseudomonas fluorescens Pf-5.</title>
        <authorList>
            <person name="Paulsen I.T."/>
            <person name="Press C.M."/>
            <person name="Ravel J."/>
            <person name="Kobayashi D.Y."/>
            <person name="Myers G.S.A."/>
            <person name="Mavrodi D.V."/>
            <person name="DeBoy R.T."/>
            <person name="Seshadri R."/>
            <person name="Ren Q."/>
            <person name="Madupu R."/>
            <person name="Dodson R.J."/>
            <person name="Durkin A.S."/>
            <person name="Brinkac L.M."/>
            <person name="Daugherty S.C."/>
            <person name="Sullivan S.A."/>
            <person name="Rosovitz M.J."/>
            <person name="Gwinn M.L."/>
            <person name="Zhou L."/>
            <person name="Schneider D.J."/>
            <person name="Cartinhour S.W."/>
            <person name="Nelson W.C."/>
            <person name="Weidman J."/>
            <person name="Watkins K."/>
            <person name="Tran K."/>
            <person name="Khouri H."/>
            <person name="Pierson E.A."/>
            <person name="Pierson L.S. III"/>
            <person name="Thomashow L.S."/>
            <person name="Loper J.E."/>
        </authorList>
    </citation>
    <scope>NUCLEOTIDE SEQUENCE [LARGE SCALE GENOMIC DNA]</scope>
    <source>
        <strain>ATCC BAA-477 / NRRL B-23932 / Pf-5</strain>
    </source>
</reference>
<name>SPRT_PSEF5</name>
<dbReference type="EMBL" id="CP000076">
    <property type="protein sequence ID" value="AAY93716.1"/>
    <property type="molecule type" value="Genomic_DNA"/>
</dbReference>
<dbReference type="RefSeq" id="WP_011062728.1">
    <property type="nucleotide sequence ID" value="NC_004129.6"/>
</dbReference>
<dbReference type="STRING" id="220664.PFL_4465"/>
<dbReference type="DNASU" id="3478584"/>
<dbReference type="KEGG" id="pfl:PFL_4465"/>
<dbReference type="PATRIC" id="fig|220664.5.peg.4570"/>
<dbReference type="eggNOG" id="COG3091">
    <property type="taxonomic scope" value="Bacteria"/>
</dbReference>
<dbReference type="HOGENOM" id="CLU_113336_0_1_6"/>
<dbReference type="Proteomes" id="UP000008540">
    <property type="component" value="Chromosome"/>
</dbReference>
<dbReference type="GO" id="GO:0005737">
    <property type="term" value="C:cytoplasm"/>
    <property type="evidence" value="ECO:0007669"/>
    <property type="project" value="UniProtKB-SubCell"/>
</dbReference>
<dbReference type="GO" id="GO:0008270">
    <property type="term" value="F:zinc ion binding"/>
    <property type="evidence" value="ECO:0007669"/>
    <property type="project" value="UniProtKB-UniRule"/>
</dbReference>
<dbReference type="GO" id="GO:0006950">
    <property type="term" value="P:response to stress"/>
    <property type="evidence" value="ECO:0007669"/>
    <property type="project" value="UniProtKB-ARBA"/>
</dbReference>
<dbReference type="HAMAP" id="MF_00746">
    <property type="entry name" value="SprT"/>
    <property type="match status" value="1"/>
</dbReference>
<dbReference type="InterPro" id="IPR006640">
    <property type="entry name" value="SprT-like_domain"/>
</dbReference>
<dbReference type="InterPro" id="IPR023483">
    <property type="entry name" value="Uncharacterised_SprT"/>
</dbReference>
<dbReference type="NCBIfam" id="NF003421">
    <property type="entry name" value="PRK04860.1"/>
    <property type="match status" value="1"/>
</dbReference>
<dbReference type="PANTHER" id="PTHR38773">
    <property type="entry name" value="PROTEIN SPRT"/>
    <property type="match status" value="1"/>
</dbReference>
<dbReference type="PANTHER" id="PTHR38773:SF1">
    <property type="entry name" value="PROTEIN SPRT"/>
    <property type="match status" value="1"/>
</dbReference>
<dbReference type="Pfam" id="PF10263">
    <property type="entry name" value="SprT-like"/>
    <property type="match status" value="1"/>
</dbReference>
<dbReference type="SMART" id="SM00731">
    <property type="entry name" value="SprT"/>
    <property type="match status" value="1"/>
</dbReference>
<dbReference type="PROSITE" id="PS00142">
    <property type="entry name" value="ZINC_PROTEASE"/>
    <property type="match status" value="1"/>
</dbReference>
<proteinExistence type="inferred from homology"/>